<feature type="chain" id="PRO_0000295139" description="Protein FAM221A">
    <location>
        <begin position="1"/>
        <end position="298"/>
    </location>
</feature>
<feature type="region of interest" description="Disordered" evidence="1">
    <location>
        <begin position="241"/>
        <end position="263"/>
    </location>
</feature>
<feature type="compositionally biased region" description="Polar residues" evidence="1">
    <location>
        <begin position="241"/>
        <end position="257"/>
    </location>
</feature>
<feature type="splice variant" id="VSP_026738" description="In isoform 3." evidence="3">
    <location>
        <begin position="23"/>
        <end position="80"/>
    </location>
</feature>
<feature type="splice variant" id="VSP_026739" description="In isoform 2 and isoform 3." evidence="3">
    <location>
        <begin position="213"/>
        <end position="248"/>
    </location>
</feature>
<feature type="sequence variant" id="VAR_033215" description="In dbSNP:rs17855785." evidence="2">
    <original>Y</original>
    <variation>H</variation>
    <location>
        <position position="20"/>
    </location>
</feature>
<feature type="sequence variant" id="VAR_033216" description="In dbSNP:rs34518648.">
    <original>A</original>
    <variation>T</variation>
    <location>
        <position position="90"/>
    </location>
</feature>
<feature type="sequence variant" id="VAR_033217" description="In dbSNP:rs35495590.">
    <original>C</original>
    <variation>R</variation>
    <location>
        <position position="95"/>
    </location>
</feature>
<feature type="sequence variant" id="VAR_033218" description="In dbSNP:rs17855786." evidence="2">
    <original>H</original>
    <variation>R</variation>
    <location>
        <position position="128"/>
    </location>
</feature>
<feature type="sequence variant" id="VAR_033219" description="In dbSNP:rs35928055.">
    <original>S</original>
    <variation>G</variation>
    <location>
        <position position="240"/>
    </location>
</feature>
<feature type="sequence conflict" description="In Ref. 2; AAH42034." evidence="4" ref="2">
    <original>C</original>
    <variation>R</variation>
    <location>
        <position position="101"/>
    </location>
</feature>
<keyword id="KW-0025">Alternative splicing</keyword>
<keyword id="KW-1267">Proteomics identification</keyword>
<keyword id="KW-1185">Reference proteome</keyword>
<organism>
    <name type="scientific">Homo sapiens</name>
    <name type="common">Human</name>
    <dbReference type="NCBI Taxonomy" id="9606"/>
    <lineage>
        <taxon>Eukaryota</taxon>
        <taxon>Metazoa</taxon>
        <taxon>Chordata</taxon>
        <taxon>Craniata</taxon>
        <taxon>Vertebrata</taxon>
        <taxon>Euteleostomi</taxon>
        <taxon>Mammalia</taxon>
        <taxon>Eutheria</taxon>
        <taxon>Euarchontoglires</taxon>
        <taxon>Primates</taxon>
        <taxon>Haplorrhini</taxon>
        <taxon>Catarrhini</taxon>
        <taxon>Hominidae</taxon>
        <taxon>Homo</taxon>
    </lineage>
</organism>
<reference key="1">
    <citation type="journal article" date="2003" name="Science">
        <title>Human chromosome 7: DNA sequence and biology.</title>
        <authorList>
            <person name="Scherer S.W."/>
            <person name="Cheung J."/>
            <person name="MacDonald J.R."/>
            <person name="Osborne L.R."/>
            <person name="Nakabayashi K."/>
            <person name="Herbrick J.-A."/>
            <person name="Carson A.R."/>
            <person name="Parker-Katiraee L."/>
            <person name="Skaug J."/>
            <person name="Khaja R."/>
            <person name="Zhang J."/>
            <person name="Hudek A.K."/>
            <person name="Li M."/>
            <person name="Haddad M."/>
            <person name="Duggan G.E."/>
            <person name="Fernandez B.A."/>
            <person name="Kanematsu E."/>
            <person name="Gentles S."/>
            <person name="Christopoulos C.C."/>
            <person name="Choufani S."/>
            <person name="Kwasnicka D."/>
            <person name="Zheng X.H."/>
            <person name="Lai Z."/>
            <person name="Nusskern D.R."/>
            <person name="Zhang Q."/>
            <person name="Gu Z."/>
            <person name="Lu F."/>
            <person name="Zeesman S."/>
            <person name="Nowaczyk M.J."/>
            <person name="Teshima I."/>
            <person name="Chitayat D."/>
            <person name="Shuman C."/>
            <person name="Weksberg R."/>
            <person name="Zackai E.H."/>
            <person name="Grebe T.A."/>
            <person name="Cox S.R."/>
            <person name="Kirkpatrick S.J."/>
            <person name="Rahman N."/>
            <person name="Friedman J.M."/>
            <person name="Heng H.H.Q."/>
            <person name="Pelicci P.G."/>
            <person name="Lo-Coco F."/>
            <person name="Belloni E."/>
            <person name="Shaffer L.G."/>
            <person name="Pober B."/>
            <person name="Morton C.C."/>
            <person name="Gusella J.F."/>
            <person name="Bruns G.A.P."/>
            <person name="Korf B.R."/>
            <person name="Quade B.J."/>
            <person name="Ligon A.H."/>
            <person name="Ferguson H."/>
            <person name="Higgins A.W."/>
            <person name="Leach N.T."/>
            <person name="Herrick S.R."/>
            <person name="Lemyre E."/>
            <person name="Farra C.G."/>
            <person name="Kim H.-G."/>
            <person name="Summers A.M."/>
            <person name="Gripp K.W."/>
            <person name="Roberts W."/>
            <person name="Szatmari P."/>
            <person name="Winsor E.J.T."/>
            <person name="Grzeschik K.-H."/>
            <person name="Teebi A."/>
            <person name="Minassian B.A."/>
            <person name="Kere J."/>
            <person name="Armengol L."/>
            <person name="Pujana M.A."/>
            <person name="Estivill X."/>
            <person name="Wilson M.D."/>
            <person name="Koop B.F."/>
            <person name="Tosi S."/>
            <person name="Moore G.E."/>
            <person name="Boright A.P."/>
            <person name="Zlotorynski E."/>
            <person name="Kerem B."/>
            <person name="Kroisel P.M."/>
            <person name="Petek E."/>
            <person name="Oscier D.G."/>
            <person name="Mould S.J."/>
            <person name="Doehner H."/>
            <person name="Doehner K."/>
            <person name="Rommens J.M."/>
            <person name="Vincent J.B."/>
            <person name="Venter J.C."/>
            <person name="Li P.W."/>
            <person name="Mural R.J."/>
            <person name="Adams M.D."/>
            <person name="Tsui L.-C."/>
        </authorList>
    </citation>
    <scope>NUCLEOTIDE SEQUENCE [LARGE SCALE GENOMIC DNA]</scope>
</reference>
<reference key="2">
    <citation type="journal article" date="2004" name="Genome Res.">
        <title>The status, quality, and expansion of the NIH full-length cDNA project: the Mammalian Gene Collection (MGC).</title>
        <authorList>
            <consortium name="The MGC Project Team"/>
        </authorList>
    </citation>
    <scope>NUCLEOTIDE SEQUENCE [LARGE SCALE MRNA] (ISOFORMS 1; 2 AND 3)</scope>
    <scope>VARIANTS HIS-20 AND ARG-128</scope>
    <source>
        <tissue>Blood vessel</tissue>
        <tissue>Brain</tissue>
        <tissue>Lung</tissue>
    </source>
</reference>
<evidence type="ECO:0000256" key="1">
    <source>
        <dbReference type="SAM" id="MobiDB-lite"/>
    </source>
</evidence>
<evidence type="ECO:0000269" key="2">
    <source>
    </source>
</evidence>
<evidence type="ECO:0000303" key="3">
    <source>
    </source>
</evidence>
<evidence type="ECO:0000305" key="4"/>
<comment type="interaction">
    <interactant intactId="EBI-11960181">
        <id>A4D161</id>
    </interactant>
    <interactant intactId="EBI-11954519">
        <id>Q49AR9</id>
        <label>ANKS1A</label>
    </interactant>
    <organismsDiffer>false</organismsDiffer>
    <experiments>3</experiments>
</comment>
<comment type="interaction">
    <interactant intactId="EBI-11960181">
        <id>A4D161</id>
    </interactant>
    <interactant intactId="EBI-2802782">
        <id>Q6NVV7</id>
        <label>CDPF1</label>
    </interactant>
    <organismsDiffer>false</organismsDiffer>
    <experiments>3</experiments>
</comment>
<comment type="interaction">
    <interactant intactId="EBI-11960181">
        <id>A4D161</id>
    </interactant>
    <interactant intactId="EBI-3867333">
        <id>A8MQ03</id>
        <label>CYSRT1</label>
    </interactant>
    <organismsDiffer>false</organismsDiffer>
    <experiments>3</experiments>
</comment>
<comment type="interaction">
    <interactant intactId="EBI-11960181">
        <id>A4D161</id>
    </interactant>
    <interactant intactId="EBI-10976677">
        <id>G5E9A7</id>
        <label>DMWD</label>
    </interactant>
    <organismsDiffer>false</organismsDiffer>
    <experiments>3</experiments>
</comment>
<comment type="interaction">
    <interactant intactId="EBI-11960181">
        <id>A4D161</id>
    </interactant>
    <interactant intactId="EBI-740785">
        <id>P49639</id>
        <label>HOXA1</label>
    </interactant>
    <organismsDiffer>false</organismsDiffer>
    <experiments>7</experiments>
</comment>
<comment type="interaction">
    <interactant intactId="EBI-11960181">
        <id>A4D161</id>
    </interactant>
    <interactant intactId="EBI-11959885">
        <id>Q07627</id>
        <label>KRTAP1-1</label>
    </interactant>
    <organismsDiffer>false</organismsDiffer>
    <experiments>3</experiments>
</comment>
<comment type="interaction">
    <interactant intactId="EBI-11960181">
        <id>A4D161</id>
    </interactant>
    <interactant intactId="EBI-18395721">
        <id>Q3LI59</id>
        <label>KRTAP21-2</label>
    </interactant>
    <organismsDiffer>false</organismsDiffer>
    <experiments>3</experiments>
</comment>
<comment type="interaction">
    <interactant intactId="EBI-11960181">
        <id>A4D161</id>
    </interactant>
    <interactant intactId="EBI-10302392">
        <id>Q9BYQ6</id>
        <label>KRTAP4-11</label>
    </interactant>
    <organismsDiffer>false</organismsDiffer>
    <experiments>3</experiments>
</comment>
<comment type="interaction">
    <interactant intactId="EBI-11960181">
        <id>A4D161</id>
    </interactant>
    <interactant intactId="EBI-12039345">
        <id>Q9UBR4-2</id>
        <label>LHX3</label>
    </interactant>
    <organismsDiffer>false</organismsDiffer>
    <experiments>3</experiments>
</comment>
<comment type="interaction">
    <interactant intactId="EBI-11960181">
        <id>A4D161</id>
    </interactant>
    <interactant intactId="EBI-16439278">
        <id>Q6FHY5</id>
        <label>MEOX2</label>
    </interactant>
    <organismsDiffer>false</organismsDiffer>
    <experiments>3</experiments>
</comment>
<comment type="interaction">
    <interactant intactId="EBI-11960181">
        <id>A4D161</id>
    </interactant>
    <interactant intactId="EBI-22310682">
        <id>P0DPK4</id>
        <label>NOTCH2NLC</label>
    </interactant>
    <organismsDiffer>false</organismsDiffer>
    <experiments>3</experiments>
</comment>
<comment type="interaction">
    <interactant intactId="EBI-11960181">
        <id>A4D161</id>
    </interactant>
    <interactant intactId="EBI-357275">
        <id>Q99471</id>
        <label>PFDN5</label>
    </interactant>
    <organismsDiffer>false</organismsDiffer>
    <experiments>3</experiments>
</comment>
<comment type="interaction">
    <interactant intactId="EBI-11960181">
        <id>A4D161</id>
    </interactant>
    <interactant intactId="EBI-10272071">
        <id>Q8TAS3</id>
        <label>PRRG2</label>
    </interactant>
    <organismsDiffer>false</organismsDiffer>
    <experiments>3</experiments>
</comment>
<comment type="interaction">
    <interactant intactId="EBI-11960181">
        <id>A4D161</id>
    </interactant>
    <interactant intactId="EBI-5235340">
        <id>Q7Z699</id>
        <label>SPRED1</label>
    </interactant>
    <organismsDiffer>false</organismsDiffer>
    <experiments>3</experiments>
</comment>
<comment type="interaction">
    <interactant intactId="EBI-11960181">
        <id>A4D161</id>
    </interactant>
    <interactant intactId="EBI-474067">
        <id>P55854</id>
        <label>SUMO3</label>
    </interactant>
    <organismsDiffer>false</organismsDiffer>
    <experiments>3</experiments>
</comment>
<comment type="interaction">
    <interactant intactId="EBI-11960181">
        <id>A4D161</id>
    </interactant>
    <interactant intactId="EBI-740727">
        <id>Q8TAU3</id>
        <label>ZNF417</label>
    </interactant>
    <organismsDiffer>false</organismsDiffer>
    <experiments>3</experiments>
</comment>
<comment type="alternative products">
    <event type="alternative splicing"/>
    <isoform>
        <id>A4D161-1</id>
        <name>1</name>
        <sequence type="displayed"/>
    </isoform>
    <isoform>
        <id>A4D161-2</id>
        <name>2</name>
        <sequence type="described" ref="VSP_026739"/>
    </isoform>
    <isoform>
        <id>A4D161-3</id>
        <name>3</name>
        <sequence type="described" ref="VSP_026738 VSP_026739"/>
    </isoform>
</comment>
<comment type="similarity">
    <text evidence="4">Belongs to the FAM221 family.</text>
</comment>
<comment type="sequence caution" evidence="4">
    <conflict type="frameshift">
        <sequence resource="EMBL-CDS" id="AAH26000"/>
    </conflict>
</comment>
<comment type="sequence caution" evidence="4">
    <conflict type="frameshift">
        <sequence resource="EMBL-CDS" id="AAH42034"/>
    </conflict>
</comment>
<sequence>MERLTLPLGGAAAVDEYLEYRRIVGEDDGGKLFTPEEYEEYKRKVLPLRLQNRLFVSWRSPTGMDCKLVGPETLCFCTHRYKQHKTDLEAIPQQCPIDLPCQVTGCQCRAYLYVPLNGSQPIRCRCKHFADQHSAAPGFTCNTCSKCSGFHSCFTCACGQPAYAHDTVVETKQERLAQEKPVGQDIPYAAMGGLTGFSSLAEGYMRLDDSGIGVPSVEFLESPITAVDSPFLKAFQASSSSSPETLTDVGTSSQVSSLRRPEEDDMAFFERRYQERMKMEKAAKWKGKAPLPSATKPS</sequence>
<protein>
    <recommendedName>
        <fullName>Protein FAM221A</fullName>
    </recommendedName>
</protein>
<name>F221A_HUMAN</name>
<dbReference type="EMBL" id="CH236948">
    <property type="protein sequence ID" value="EAL24251.1"/>
    <property type="molecule type" value="Genomic_DNA"/>
</dbReference>
<dbReference type="EMBL" id="BC026000">
    <property type="protein sequence ID" value="AAH26000.1"/>
    <property type="status" value="ALT_FRAME"/>
    <property type="molecule type" value="mRNA"/>
</dbReference>
<dbReference type="EMBL" id="BC042034">
    <property type="protein sequence ID" value="AAH42034.1"/>
    <property type="status" value="ALT_FRAME"/>
    <property type="molecule type" value="mRNA"/>
</dbReference>
<dbReference type="EMBL" id="BC063130">
    <property type="protein sequence ID" value="AAH63130.1"/>
    <property type="molecule type" value="mRNA"/>
</dbReference>
<dbReference type="CCDS" id="CCDS47561.1">
    <molecule id="A4D161-2"/>
</dbReference>
<dbReference type="CCDS" id="CCDS47562.1">
    <molecule id="A4D161-3"/>
</dbReference>
<dbReference type="CCDS" id="CCDS5385.1">
    <molecule id="A4D161-1"/>
</dbReference>
<dbReference type="RefSeq" id="NP_001120836.1">
    <molecule id="A4D161-2"/>
    <property type="nucleotide sequence ID" value="NM_001127364.3"/>
</dbReference>
<dbReference type="RefSeq" id="NP_001120837.1">
    <molecule id="A4D161-3"/>
    <property type="nucleotide sequence ID" value="NM_001127365.3"/>
</dbReference>
<dbReference type="RefSeq" id="NP_001287861.1">
    <property type="nucleotide sequence ID" value="NM_001300932.1"/>
</dbReference>
<dbReference type="RefSeq" id="NP_954587.2">
    <molecule id="A4D161-1"/>
    <property type="nucleotide sequence ID" value="NM_199136.5"/>
</dbReference>
<dbReference type="RefSeq" id="XP_011513671.1">
    <molecule id="A4D161-1"/>
    <property type="nucleotide sequence ID" value="XM_011515369.3"/>
</dbReference>
<dbReference type="RefSeq" id="XP_016867623.1">
    <molecule id="A4D161-2"/>
    <property type="nucleotide sequence ID" value="XM_017012134.2"/>
</dbReference>
<dbReference type="RefSeq" id="XP_054214071.1">
    <molecule id="A4D161-1"/>
    <property type="nucleotide sequence ID" value="XM_054358096.1"/>
</dbReference>
<dbReference type="RefSeq" id="XP_054214073.1">
    <molecule id="A4D161-2"/>
    <property type="nucleotide sequence ID" value="XM_054358098.1"/>
</dbReference>
<dbReference type="BioGRID" id="131030">
    <property type="interactions" value="24"/>
</dbReference>
<dbReference type="FunCoup" id="A4D161">
    <property type="interactions" value="51"/>
</dbReference>
<dbReference type="IntAct" id="A4D161">
    <property type="interactions" value="20"/>
</dbReference>
<dbReference type="MINT" id="A4D161"/>
<dbReference type="STRING" id="9606.ENSP00000342576"/>
<dbReference type="GlyCosmos" id="A4D161">
    <property type="glycosylation" value="1 site, 1 glycan"/>
</dbReference>
<dbReference type="GlyGen" id="A4D161">
    <property type="glycosylation" value="1 site, 1 O-linked glycan (1 site)"/>
</dbReference>
<dbReference type="iPTMnet" id="A4D161"/>
<dbReference type="PhosphoSitePlus" id="A4D161"/>
<dbReference type="BioMuta" id="FAM221A"/>
<dbReference type="jPOST" id="A4D161"/>
<dbReference type="MassIVE" id="A4D161"/>
<dbReference type="PaxDb" id="9606-ENSP00000342576"/>
<dbReference type="PeptideAtlas" id="A4D161"/>
<dbReference type="ProteomicsDB" id="604">
    <molecule id="A4D161-1"/>
</dbReference>
<dbReference type="ProteomicsDB" id="605">
    <molecule id="A4D161-2"/>
</dbReference>
<dbReference type="ProteomicsDB" id="606">
    <molecule id="A4D161-3"/>
</dbReference>
<dbReference type="Pumba" id="A4D161"/>
<dbReference type="TopDownProteomics" id="A4D161-1">
    <molecule id="A4D161-1"/>
</dbReference>
<dbReference type="Antibodypedia" id="12123">
    <property type="antibodies" value="39 antibodies from 8 providers"/>
</dbReference>
<dbReference type="DNASU" id="340277"/>
<dbReference type="Ensembl" id="ENST00000344962.9">
    <molecule id="A4D161-1"/>
    <property type="protein sequence ID" value="ENSP00000342576.4"/>
    <property type="gene ID" value="ENSG00000188732.11"/>
</dbReference>
<dbReference type="Ensembl" id="ENST00000409192.7">
    <molecule id="A4D161-2"/>
    <property type="protein sequence ID" value="ENSP00000386927.3"/>
    <property type="gene ID" value="ENSG00000188732.11"/>
</dbReference>
<dbReference type="Ensembl" id="ENST00000409994.3">
    <molecule id="A4D161-3"/>
    <property type="protein sequence ID" value="ENSP00000386631.3"/>
    <property type="gene ID" value="ENSG00000188732.11"/>
</dbReference>
<dbReference type="GeneID" id="340277"/>
<dbReference type="KEGG" id="hsa:340277"/>
<dbReference type="MANE-Select" id="ENST00000344962.9">
    <property type="protein sequence ID" value="ENSP00000342576.4"/>
    <property type="RefSeq nucleotide sequence ID" value="NM_199136.5"/>
    <property type="RefSeq protein sequence ID" value="NP_954587.2"/>
</dbReference>
<dbReference type="UCSC" id="uc003swo.4">
    <molecule id="A4D161-1"/>
    <property type="organism name" value="human"/>
</dbReference>
<dbReference type="AGR" id="HGNC:27977"/>
<dbReference type="CTD" id="340277"/>
<dbReference type="DisGeNET" id="340277"/>
<dbReference type="GeneCards" id="FAM221A"/>
<dbReference type="HGNC" id="HGNC:27977">
    <property type="gene designation" value="FAM221A"/>
</dbReference>
<dbReference type="HPA" id="ENSG00000188732">
    <property type="expression patterns" value="Tissue enhanced (brain)"/>
</dbReference>
<dbReference type="neXtProt" id="NX_A4D161"/>
<dbReference type="OpenTargets" id="ENSG00000188732"/>
<dbReference type="PharmGKB" id="PA162380501"/>
<dbReference type="VEuPathDB" id="HostDB:ENSG00000188732"/>
<dbReference type="eggNOG" id="ENOG502QR3M">
    <property type="taxonomic scope" value="Eukaryota"/>
</dbReference>
<dbReference type="GeneTree" id="ENSGT00770000120611"/>
<dbReference type="HOGENOM" id="CLU_080852_0_0_1"/>
<dbReference type="InParanoid" id="A4D161"/>
<dbReference type="OMA" id="HDWMATE"/>
<dbReference type="OrthoDB" id="310364at2759"/>
<dbReference type="PAN-GO" id="A4D161">
    <property type="GO annotations" value="0 GO annotations based on evolutionary models"/>
</dbReference>
<dbReference type="PhylomeDB" id="A4D161"/>
<dbReference type="TreeFam" id="TF329392"/>
<dbReference type="PathwayCommons" id="A4D161"/>
<dbReference type="SignaLink" id="A4D161"/>
<dbReference type="BioGRID-ORCS" id="340277">
    <property type="hits" value="5 hits in 1153 CRISPR screens"/>
</dbReference>
<dbReference type="ChiTaRS" id="FAM221A">
    <property type="organism name" value="human"/>
</dbReference>
<dbReference type="GenomeRNAi" id="340277"/>
<dbReference type="Pharos" id="A4D161">
    <property type="development level" value="Tdark"/>
</dbReference>
<dbReference type="PRO" id="PR:A4D161"/>
<dbReference type="Proteomes" id="UP000005640">
    <property type="component" value="Chromosome 7"/>
</dbReference>
<dbReference type="RNAct" id="A4D161">
    <property type="molecule type" value="protein"/>
</dbReference>
<dbReference type="Bgee" id="ENSG00000188732">
    <property type="expression patterns" value="Expressed in buccal mucosa cell and 163 other cell types or tissues"/>
</dbReference>
<dbReference type="ExpressionAtlas" id="A4D161">
    <property type="expression patterns" value="baseline and differential"/>
</dbReference>
<dbReference type="InterPro" id="IPR026755">
    <property type="entry name" value="Fam221a/b"/>
</dbReference>
<dbReference type="PANTHER" id="PTHR31214:SF2">
    <property type="entry name" value="PROTEIN FAM221A"/>
    <property type="match status" value="1"/>
</dbReference>
<dbReference type="PANTHER" id="PTHR31214">
    <property type="entry name" value="PROTEIN FAM221A-RELATED"/>
    <property type="match status" value="1"/>
</dbReference>
<dbReference type="Pfam" id="PF14753">
    <property type="entry name" value="FAM221"/>
    <property type="match status" value="1"/>
</dbReference>
<proteinExistence type="evidence at protein level"/>
<accession>A4D161</accession>
<accession>Q05CG4</accession>
<accession>Q4G0Q7</accession>
<accession>Q6P519</accession>
<gene>
    <name type="primary">FAM221A</name>
    <name type="synonym">C7orf46</name>
</gene>